<name>ACYP_METHJ</name>
<feature type="chain" id="PRO_0000326862" description="Acylphosphatase">
    <location>
        <begin position="1"/>
        <end position="91"/>
    </location>
</feature>
<feature type="domain" description="Acylphosphatase-like" evidence="1">
    <location>
        <begin position="3"/>
        <end position="90"/>
    </location>
</feature>
<feature type="active site" evidence="1">
    <location>
        <position position="18"/>
    </location>
</feature>
<feature type="active site" evidence="1">
    <location>
        <position position="36"/>
    </location>
</feature>
<proteinExistence type="inferred from homology"/>
<protein>
    <recommendedName>
        <fullName>Acylphosphatase</fullName>
        <ecNumber>3.6.1.7</ecNumber>
    </recommendedName>
    <alternativeName>
        <fullName>Acylphosphate phosphohydrolase</fullName>
    </alternativeName>
</protein>
<accession>Q2FNJ0</accession>
<dbReference type="EC" id="3.6.1.7"/>
<dbReference type="EMBL" id="CP000254">
    <property type="protein sequence ID" value="ABD40958.1"/>
    <property type="status" value="ALT_INIT"/>
    <property type="molecule type" value="Genomic_DNA"/>
</dbReference>
<dbReference type="RefSeq" id="WP_048067328.1">
    <property type="nucleotide sequence ID" value="NC_007796.1"/>
</dbReference>
<dbReference type="SMR" id="Q2FNJ0"/>
<dbReference type="STRING" id="323259.Mhun_1211"/>
<dbReference type="EnsemblBacteria" id="ABD40958">
    <property type="protein sequence ID" value="ABD40958"/>
    <property type="gene ID" value="Mhun_1211"/>
</dbReference>
<dbReference type="GeneID" id="3924243"/>
<dbReference type="KEGG" id="mhu:Mhun_1211"/>
<dbReference type="eggNOG" id="arCOG01674">
    <property type="taxonomic scope" value="Archaea"/>
</dbReference>
<dbReference type="HOGENOM" id="CLU_141932_2_0_2"/>
<dbReference type="InParanoid" id="Q2FNJ0"/>
<dbReference type="OrthoDB" id="6643at2157"/>
<dbReference type="Proteomes" id="UP000001941">
    <property type="component" value="Chromosome"/>
</dbReference>
<dbReference type="GO" id="GO:0003998">
    <property type="term" value="F:acylphosphatase activity"/>
    <property type="evidence" value="ECO:0007669"/>
    <property type="project" value="UniProtKB-EC"/>
</dbReference>
<dbReference type="Gene3D" id="3.30.70.100">
    <property type="match status" value="1"/>
</dbReference>
<dbReference type="InterPro" id="IPR020456">
    <property type="entry name" value="Acylphosphatase"/>
</dbReference>
<dbReference type="InterPro" id="IPR001792">
    <property type="entry name" value="Acylphosphatase-like_dom"/>
</dbReference>
<dbReference type="InterPro" id="IPR036046">
    <property type="entry name" value="Acylphosphatase-like_dom_sf"/>
</dbReference>
<dbReference type="InterPro" id="IPR017968">
    <property type="entry name" value="Acylphosphatase_CS"/>
</dbReference>
<dbReference type="PANTHER" id="PTHR47268">
    <property type="entry name" value="ACYLPHOSPHATASE"/>
    <property type="match status" value="1"/>
</dbReference>
<dbReference type="PANTHER" id="PTHR47268:SF4">
    <property type="entry name" value="ACYLPHOSPHATASE"/>
    <property type="match status" value="1"/>
</dbReference>
<dbReference type="Pfam" id="PF00708">
    <property type="entry name" value="Acylphosphatase"/>
    <property type="match status" value="1"/>
</dbReference>
<dbReference type="SUPFAM" id="SSF54975">
    <property type="entry name" value="Acylphosphatase/BLUF domain-like"/>
    <property type="match status" value="1"/>
</dbReference>
<dbReference type="PROSITE" id="PS00150">
    <property type="entry name" value="ACYLPHOSPHATASE_1"/>
    <property type="match status" value="1"/>
</dbReference>
<dbReference type="PROSITE" id="PS00151">
    <property type="entry name" value="ACYLPHOSPHATASE_2"/>
    <property type="match status" value="1"/>
</dbReference>
<dbReference type="PROSITE" id="PS51160">
    <property type="entry name" value="ACYLPHOSPHATASE_3"/>
    <property type="match status" value="1"/>
</dbReference>
<organism>
    <name type="scientific">Methanospirillum hungatei JF-1 (strain ATCC 27890 / DSM 864 / NBRC 100397 / JF-1)</name>
    <dbReference type="NCBI Taxonomy" id="323259"/>
    <lineage>
        <taxon>Archaea</taxon>
        <taxon>Methanobacteriati</taxon>
        <taxon>Methanobacteriota</taxon>
        <taxon>Stenosarchaea group</taxon>
        <taxon>Methanomicrobia</taxon>
        <taxon>Methanomicrobiales</taxon>
        <taxon>Methanospirillaceae</taxon>
        <taxon>Methanospirillum</taxon>
    </lineage>
</organism>
<gene>
    <name type="primary">acyP</name>
    <name type="ordered locus">Mhun_1211</name>
</gene>
<evidence type="ECO:0000255" key="1">
    <source>
        <dbReference type="PROSITE-ProRule" id="PRU00520"/>
    </source>
</evidence>
<evidence type="ECO:0000305" key="2"/>
<reference key="1">
    <citation type="journal article" date="2016" name="Stand. Genomic Sci.">
        <title>Complete genome sequence of Methanospirillum hungatei type strain JF1.</title>
        <authorList>
            <person name="Gunsalus R.P."/>
            <person name="Cook L.E."/>
            <person name="Crable B."/>
            <person name="Rohlin L."/>
            <person name="McDonald E."/>
            <person name="Mouttaki H."/>
            <person name="Sieber J.R."/>
            <person name="Poweleit N."/>
            <person name="Zhou H."/>
            <person name="Lapidus A.L."/>
            <person name="Daligault H.E."/>
            <person name="Land M."/>
            <person name="Gilna P."/>
            <person name="Ivanova N."/>
            <person name="Kyrpides N."/>
            <person name="Culley D.E."/>
            <person name="McInerney M.J."/>
        </authorList>
    </citation>
    <scope>NUCLEOTIDE SEQUENCE [LARGE SCALE GENOMIC DNA]</scope>
    <source>
        <strain>ATCC 27890 / DSM 864 / NBRC 100397 / JF-1</strain>
    </source>
</reference>
<sequence>MKRVSMIVSGQVQGVGFRYYVQDIAEDMRITGWVRNLPDGTVEIDAEGKTDVLETFIRTISNTRQGAIQVRNVHVQEKEVCGYSIFTIRRD</sequence>
<keyword id="KW-0378">Hydrolase</keyword>
<keyword id="KW-1185">Reference proteome</keyword>
<comment type="catalytic activity">
    <reaction>
        <text>an acyl phosphate + H2O = a carboxylate + phosphate + H(+)</text>
        <dbReference type="Rhea" id="RHEA:14965"/>
        <dbReference type="ChEBI" id="CHEBI:15377"/>
        <dbReference type="ChEBI" id="CHEBI:15378"/>
        <dbReference type="ChEBI" id="CHEBI:29067"/>
        <dbReference type="ChEBI" id="CHEBI:43474"/>
        <dbReference type="ChEBI" id="CHEBI:59918"/>
        <dbReference type="EC" id="3.6.1.7"/>
    </reaction>
</comment>
<comment type="similarity">
    <text evidence="2">Belongs to the acylphosphatase family.</text>
</comment>
<comment type="sequence caution" evidence="2">
    <conflict type="erroneous initiation">
        <sequence resource="EMBL-CDS" id="ABD40958"/>
    </conflict>
</comment>